<organism>
    <name type="scientific">Xenopus tropicalis</name>
    <name type="common">Western clawed frog</name>
    <name type="synonym">Silurana tropicalis</name>
    <dbReference type="NCBI Taxonomy" id="8364"/>
    <lineage>
        <taxon>Eukaryota</taxon>
        <taxon>Metazoa</taxon>
        <taxon>Chordata</taxon>
        <taxon>Craniata</taxon>
        <taxon>Vertebrata</taxon>
        <taxon>Euteleostomi</taxon>
        <taxon>Amphibia</taxon>
        <taxon>Batrachia</taxon>
        <taxon>Anura</taxon>
        <taxon>Pipoidea</taxon>
        <taxon>Pipidae</taxon>
        <taxon>Xenopodinae</taxon>
        <taxon>Xenopus</taxon>
        <taxon>Silurana</taxon>
    </lineage>
</organism>
<protein>
    <recommendedName>
        <fullName>Interleukin enhancer-binding factor 2 homolog</fullName>
    </recommendedName>
</protein>
<accession>Q6P8G1</accession>
<accession>Q28DF3</accession>
<name>ILF2_XENTR</name>
<gene>
    <name type="primary">ilf2</name>
    <name type="ORF">TEgg021l09.1</name>
    <name type="ORF">TEgg033l23.1</name>
</gene>
<keyword id="KW-0010">Activator</keyword>
<keyword id="KW-0238">DNA-binding</keyword>
<keyword id="KW-0539">Nucleus</keyword>
<keyword id="KW-1185">Reference proteome</keyword>
<keyword id="KW-0804">Transcription</keyword>
<keyword id="KW-0805">Transcription regulation</keyword>
<feature type="chain" id="PRO_0000126068" description="Interleukin enhancer-binding factor 2 homolog">
    <location>
        <begin position="1"/>
        <end position="388"/>
    </location>
</feature>
<feature type="domain" description="DZF" evidence="2">
    <location>
        <begin position="23"/>
        <end position="370"/>
    </location>
</feature>
<feature type="region of interest" description="Disordered" evidence="3">
    <location>
        <begin position="349"/>
        <end position="388"/>
    </location>
</feature>
<feature type="compositionally biased region" description="Basic and acidic residues" evidence="3">
    <location>
        <begin position="355"/>
        <end position="366"/>
    </location>
</feature>
<feature type="compositionally biased region" description="Acidic residues" evidence="3">
    <location>
        <begin position="367"/>
        <end position="388"/>
    </location>
</feature>
<proteinExistence type="evidence at transcript level"/>
<evidence type="ECO:0000250" key="1"/>
<evidence type="ECO:0000255" key="2">
    <source>
        <dbReference type="PROSITE-ProRule" id="PRU01040"/>
    </source>
</evidence>
<evidence type="ECO:0000256" key="3">
    <source>
        <dbReference type="SAM" id="MobiDB-lite"/>
    </source>
</evidence>
<sequence length="388" mass="42894">MRGERGRGRGRFGSRVGPNTGFRPFVPHIPFDFHVCEMAFPRVKPAPDDSSFSESLLKRNQDLAPSTAEQASILSLVTKINNVIDNLIVAPGNFEVQIEEVRQVGSYKKGTMSTGHNVADLVVILKILPTLEAVSALGIKVVETLRTQDPAEVLTMLTNETGFEISSADATVKILITTVPPNLRKLDPELHLDIKVLQSALAAIRHARWFEENASHSTVKVLIRLLKDLRSRFPGFEPLTPWILDLLGHYAVMNNPTRQPLALNVSYKRCLQMLAAGLFLPGSVGITDPCESGNFRVHTVMTLEQQDMVCYTAQTLVRILSHGGFRKILGLEGDASALATEMSTWDGVIVTPSEKAYEKPPERKEGEEDENQDIPEGAEEEESMETQE</sequence>
<dbReference type="EMBL" id="CR848422">
    <property type="protein sequence ID" value="CAJ81376.1"/>
    <property type="molecule type" value="mRNA"/>
</dbReference>
<dbReference type="EMBL" id="CR855547">
    <property type="protein sequence ID" value="CAJ81441.1"/>
    <property type="molecule type" value="mRNA"/>
</dbReference>
<dbReference type="EMBL" id="BC061266">
    <property type="protein sequence ID" value="AAH61266.1"/>
    <property type="molecule type" value="mRNA"/>
</dbReference>
<dbReference type="RefSeq" id="NP_988997.1">
    <property type="nucleotide sequence ID" value="NM_203666.1"/>
</dbReference>
<dbReference type="SMR" id="Q6P8G1"/>
<dbReference type="FunCoup" id="Q6P8G1">
    <property type="interactions" value="2513"/>
</dbReference>
<dbReference type="PaxDb" id="8364-ENSXETP00000060958"/>
<dbReference type="DNASU" id="394593"/>
<dbReference type="GeneID" id="394593"/>
<dbReference type="KEGG" id="xtr:394593"/>
<dbReference type="CTD" id="3608"/>
<dbReference type="Xenbase" id="XB-GENE-876477">
    <property type="gene designation" value="ilf2"/>
</dbReference>
<dbReference type="eggNOG" id="KOG3793">
    <property type="taxonomic scope" value="Eukaryota"/>
</dbReference>
<dbReference type="InParanoid" id="Q6P8G1"/>
<dbReference type="OMA" id="YLAIEMS"/>
<dbReference type="OrthoDB" id="5775647at2759"/>
<dbReference type="Reactome" id="R-XTR-6798695">
    <property type="pathway name" value="Neutrophil degranulation"/>
</dbReference>
<dbReference type="Reactome" id="R-XTR-9833482">
    <property type="pathway name" value="PKR-mediated signaling"/>
</dbReference>
<dbReference type="Proteomes" id="UP000008143">
    <property type="component" value="Chromosome 8"/>
</dbReference>
<dbReference type="GO" id="GO:0005730">
    <property type="term" value="C:nucleolus"/>
    <property type="evidence" value="ECO:0000250"/>
    <property type="project" value="UniProtKB"/>
</dbReference>
<dbReference type="GO" id="GO:0005634">
    <property type="term" value="C:nucleus"/>
    <property type="evidence" value="ECO:0000250"/>
    <property type="project" value="UniProtKB"/>
</dbReference>
<dbReference type="GO" id="GO:0003677">
    <property type="term" value="F:DNA binding"/>
    <property type="evidence" value="ECO:0000250"/>
    <property type="project" value="UniProtKB"/>
</dbReference>
<dbReference type="GO" id="GO:0003725">
    <property type="term" value="F:double-stranded RNA binding"/>
    <property type="evidence" value="ECO:0000250"/>
    <property type="project" value="UniProtKB"/>
</dbReference>
<dbReference type="GO" id="GO:0045893">
    <property type="term" value="P:positive regulation of DNA-templated transcription"/>
    <property type="evidence" value="ECO:0000250"/>
    <property type="project" value="UniProtKB"/>
</dbReference>
<dbReference type="FunFam" id="1.10.1410.40:FF:000004">
    <property type="entry name" value="Interleukin enhancer-binding factor 2"/>
    <property type="match status" value="1"/>
</dbReference>
<dbReference type="FunFam" id="1.10.1410.40:FF:000010">
    <property type="entry name" value="Interleukin enhancer-binding factor 2"/>
    <property type="match status" value="1"/>
</dbReference>
<dbReference type="FunFam" id="3.30.460.10:FF:000093">
    <property type="entry name" value="Interleukin enhancer-binding factor 2"/>
    <property type="match status" value="1"/>
</dbReference>
<dbReference type="Gene3D" id="1.10.1410.40">
    <property type="match status" value="1"/>
</dbReference>
<dbReference type="Gene3D" id="3.30.460.10">
    <property type="entry name" value="Beta Polymerase, domain 2"/>
    <property type="match status" value="1"/>
</dbReference>
<dbReference type="InterPro" id="IPR006561">
    <property type="entry name" value="DZF_dom"/>
</dbReference>
<dbReference type="InterPro" id="IPR049402">
    <property type="entry name" value="DZF_dom_C"/>
</dbReference>
<dbReference type="InterPro" id="IPR049401">
    <property type="entry name" value="DZF_dom_N"/>
</dbReference>
<dbReference type="InterPro" id="IPR052134">
    <property type="entry name" value="ILF2"/>
</dbReference>
<dbReference type="InterPro" id="IPR043519">
    <property type="entry name" value="NT_sf"/>
</dbReference>
<dbReference type="PANTHER" id="PTHR46447">
    <property type="entry name" value="INTERLEUKIN ENHANCER-BINDING FACTOR"/>
    <property type="match status" value="1"/>
</dbReference>
<dbReference type="PANTHER" id="PTHR46447:SF1">
    <property type="entry name" value="INTERLEUKIN ENHANCER-BINDING FACTOR 2"/>
    <property type="match status" value="1"/>
</dbReference>
<dbReference type="Pfam" id="PF20965">
    <property type="entry name" value="DZF_C"/>
    <property type="match status" value="1"/>
</dbReference>
<dbReference type="Pfam" id="PF07528">
    <property type="entry name" value="DZF_N"/>
    <property type="match status" value="1"/>
</dbReference>
<dbReference type="SMART" id="SM00572">
    <property type="entry name" value="DZF"/>
    <property type="match status" value="1"/>
</dbReference>
<dbReference type="SUPFAM" id="SSF81301">
    <property type="entry name" value="Nucleotidyltransferase"/>
    <property type="match status" value="1"/>
</dbReference>
<dbReference type="PROSITE" id="PS51703">
    <property type="entry name" value="DZF"/>
    <property type="match status" value="1"/>
</dbReference>
<comment type="function">
    <text evidence="1">May regulate transcription of undefined genes.</text>
</comment>
<comment type="subunit">
    <text evidence="1">Forms heterodimers with ILF3.</text>
</comment>
<comment type="subcellular location">
    <subcellularLocation>
        <location evidence="1">Nucleus</location>
    </subcellularLocation>
</comment>
<reference key="1">
    <citation type="submission" date="2006-03" db="EMBL/GenBank/DDBJ databases">
        <authorList>
            <consortium name="Sanger Xenopus tropicalis EST/cDNA project"/>
        </authorList>
    </citation>
    <scope>NUCLEOTIDE SEQUENCE [LARGE SCALE MRNA]</scope>
    <source>
        <tissue>Egg</tissue>
    </source>
</reference>
<reference key="2">
    <citation type="submission" date="2003-11" db="EMBL/GenBank/DDBJ databases">
        <authorList>
            <consortium name="NIH - Xenopus Gene Collection (XGC) project"/>
        </authorList>
    </citation>
    <scope>NUCLEOTIDE SEQUENCE [LARGE SCALE MRNA]</scope>
    <source>
        <tissue>Embryo</tissue>
    </source>
</reference>